<accession>Q5X0R6</accession>
<reference key="1">
    <citation type="journal article" date="2004" name="Nat. Genet.">
        <title>Evidence in the Legionella pneumophila genome for exploitation of host cell functions and high genome plasticity.</title>
        <authorList>
            <person name="Cazalet C."/>
            <person name="Rusniok C."/>
            <person name="Brueggemann H."/>
            <person name="Zidane N."/>
            <person name="Magnier A."/>
            <person name="Ma L."/>
            <person name="Tichit M."/>
            <person name="Jarraud S."/>
            <person name="Bouchier C."/>
            <person name="Vandenesch F."/>
            <person name="Kunst F."/>
            <person name="Etienne J."/>
            <person name="Glaser P."/>
            <person name="Buchrieser C."/>
        </authorList>
    </citation>
    <scope>NUCLEOTIDE SEQUENCE [LARGE SCALE GENOMIC DNA]</scope>
    <source>
        <strain>Paris</strain>
    </source>
</reference>
<gene>
    <name type="ordered locus">lpp3030</name>
</gene>
<dbReference type="EMBL" id="CR628336">
    <property type="protein sequence ID" value="CAH14183.1"/>
    <property type="molecule type" value="Genomic_DNA"/>
</dbReference>
<dbReference type="RefSeq" id="WP_014844990.1">
    <property type="nucleotide sequence ID" value="NC_006368.1"/>
</dbReference>
<dbReference type="KEGG" id="lpp:lpp3030"/>
<dbReference type="LegioList" id="lpp3030"/>
<dbReference type="HOGENOM" id="CLU_035501_0_0_6"/>
<dbReference type="NCBIfam" id="NF033652">
    <property type="entry name" value="LbtU_sider_porin"/>
    <property type="match status" value="1"/>
</dbReference>
<protein>
    <recommendedName>
        <fullName>UPF0422 protein lpp3030</fullName>
    </recommendedName>
</protein>
<keyword id="KW-0175">Coiled coil</keyword>
<keyword id="KW-0732">Signal</keyword>
<proteinExistence type="inferred from homology"/>
<evidence type="ECO:0000255" key="1"/>
<evidence type="ECO:0000256" key="2">
    <source>
        <dbReference type="SAM" id="MobiDB-lite"/>
    </source>
</evidence>
<evidence type="ECO:0000305" key="3"/>
<sequence length="530" mass="57461">MKFKKIILALACLSSPLYADQDQQLKSEIQRLQHQAEDLQAQLNRLQKQLANHKSSQQKHEQQAAAKPAEPKSKPTTKSGAAIEEKYHSSKVEVHAPDAHPESISFYPTALIADNRVVTYIAGTPVVSSPFLGDRPAFDGSDYIVNISSINRDVRLMQQRRRLYRAYQKIGYPIPNMPIISLSGKTEPAATFNNPFRSTNTDGDITLGSSELDIAAALNENVEAYIAIAYDESPPAIGPRVNNSAFNLNMGFVNIGNLDKSPLYFTAGQVYVPFGRYSSAMVSAPVTMNLARTKTRPVIFGYKSQADTGPFAAFYGYRSDTTLGRSGVGGVNLGYIFGFDNDINGEIGGGFITSVADAGGMQSTGSNVGTTFGGFGSITNGNENVRKTKAADVHGHVGYDRYNLTLEWVGAVQSFRPQDLSFNGQGARPQAAQAELGMTFMAFNRPASIGVGYQWTKEALALNLPKQRYIGVFNISIWKDTVESIEYRHDIDYGLTQFANGAAPPGLVNLPTLGTGKSADTVSAQIGVFF</sequence>
<name>Y3030_LEGPA</name>
<comment type="similarity">
    <text evidence="3">Belongs to the UPF0422 family.</text>
</comment>
<feature type="signal peptide" evidence="1">
    <location>
        <begin position="1"/>
        <end position="19"/>
    </location>
</feature>
<feature type="chain" id="PRO_0000283757" description="UPF0422 protein lpp3030">
    <location>
        <begin position="20"/>
        <end position="530"/>
    </location>
</feature>
<feature type="region of interest" description="Disordered" evidence="2">
    <location>
        <begin position="50"/>
        <end position="81"/>
    </location>
</feature>
<feature type="coiled-coil region" evidence="1">
    <location>
        <begin position="20"/>
        <end position="66"/>
    </location>
</feature>
<feature type="compositionally biased region" description="Low complexity" evidence="2">
    <location>
        <begin position="63"/>
        <end position="79"/>
    </location>
</feature>
<organism>
    <name type="scientific">Legionella pneumophila (strain Paris)</name>
    <dbReference type="NCBI Taxonomy" id="297246"/>
    <lineage>
        <taxon>Bacteria</taxon>
        <taxon>Pseudomonadati</taxon>
        <taxon>Pseudomonadota</taxon>
        <taxon>Gammaproteobacteria</taxon>
        <taxon>Legionellales</taxon>
        <taxon>Legionellaceae</taxon>
        <taxon>Legionella</taxon>
    </lineage>
</organism>